<name>WHAMM_MOUSE</name>
<feature type="chain" id="PRO_0000295101" description="WASP homolog-associated protein with actin, membranes and microtubules">
    <location>
        <begin position="1"/>
        <end position="793"/>
    </location>
</feature>
<feature type="domain" description="WH2 1" evidence="4">
    <location>
        <begin position="698"/>
        <end position="716"/>
    </location>
</feature>
<feature type="domain" description="WH2 2" evidence="4">
    <location>
        <begin position="728"/>
        <end position="745"/>
    </location>
</feature>
<feature type="region of interest" description="Mediates association with membranes" evidence="2">
    <location>
        <begin position="1"/>
        <end position="253"/>
    </location>
</feature>
<feature type="region of interest" description="Mediates interaction with microtubules" evidence="2">
    <location>
        <begin position="254"/>
        <end position="623"/>
    </location>
</feature>
<feature type="region of interest" description="Disordered" evidence="5">
    <location>
        <begin position="556"/>
        <end position="661"/>
    </location>
</feature>
<feature type="region of interest" description="Mediates actin nucleation" evidence="2">
    <location>
        <begin position="624"/>
        <end position="793"/>
    </location>
</feature>
<feature type="region of interest" description="Disordered" evidence="5">
    <location>
        <begin position="675"/>
        <end position="699"/>
    </location>
</feature>
<feature type="region of interest" description="Disordered" evidence="5">
    <location>
        <begin position="772"/>
        <end position="793"/>
    </location>
</feature>
<feature type="coiled-coil region" evidence="3">
    <location>
        <begin position="265"/>
        <end position="290"/>
    </location>
</feature>
<feature type="coiled-coil region" evidence="3">
    <location>
        <begin position="445"/>
        <end position="503"/>
    </location>
</feature>
<feature type="coiled-coil region" evidence="3">
    <location>
        <begin position="755"/>
        <end position="785"/>
    </location>
</feature>
<feature type="compositionally biased region" description="Basic residues" evidence="5">
    <location>
        <begin position="566"/>
        <end position="579"/>
    </location>
</feature>
<feature type="compositionally biased region" description="Polar residues" evidence="5">
    <location>
        <begin position="618"/>
        <end position="628"/>
    </location>
</feature>
<feature type="compositionally biased region" description="Pro residues" evidence="5">
    <location>
        <begin position="632"/>
        <end position="654"/>
    </location>
</feature>
<feature type="compositionally biased region" description="Acidic residues" evidence="5">
    <location>
        <begin position="778"/>
        <end position="787"/>
    </location>
</feature>
<feature type="modified residue" description="Phosphoserine" evidence="9">
    <location>
        <position position="779"/>
    </location>
</feature>
<feature type="splice variant" id="VSP_026722" description="In isoform 2." evidence="7">
    <location>
        <begin position="1"/>
        <end position="206"/>
    </location>
</feature>
<feature type="splice variant" id="VSP_026729" description="In isoform 2." evidence="7">
    <location>
        <begin position="563"/>
        <end position="660"/>
    </location>
</feature>
<feature type="sequence conflict" description="In Ref. 3; BAC38074." evidence="8" ref="3">
    <original>E</original>
    <variation>D</variation>
    <location>
        <position position="363"/>
    </location>
</feature>
<feature type="sequence conflict" description="In Ref. 3; BAC38074." evidence="8" ref="3">
    <original>E</original>
    <variation>D</variation>
    <location>
        <position position="384"/>
    </location>
</feature>
<feature type="sequence conflict" description="In Ref. 3; BAC38074." evidence="8" ref="3">
    <original>L</original>
    <variation>S</variation>
    <location>
        <position position="387"/>
    </location>
</feature>
<feature type="sequence conflict" description="In Ref. 2; AAH42749." evidence="8" ref="2">
    <original>T</original>
    <variation>I</variation>
    <location>
        <position position="402"/>
    </location>
</feature>
<feature type="sequence conflict" description="In Ref. 2; AAH42749." evidence="8" ref="2">
    <original>L</original>
    <variation>P</variation>
    <location>
        <position position="640"/>
    </location>
</feature>
<accession>Q571B6</accession>
<accession>Q80VK9</accession>
<accession>Q80YT0</accession>
<accession>Q8BJP8</accession>
<organism>
    <name type="scientific">Mus musculus</name>
    <name type="common">Mouse</name>
    <dbReference type="NCBI Taxonomy" id="10090"/>
    <lineage>
        <taxon>Eukaryota</taxon>
        <taxon>Metazoa</taxon>
        <taxon>Chordata</taxon>
        <taxon>Craniata</taxon>
        <taxon>Vertebrata</taxon>
        <taxon>Euteleostomi</taxon>
        <taxon>Mammalia</taxon>
        <taxon>Eutheria</taxon>
        <taxon>Euarchontoglires</taxon>
        <taxon>Glires</taxon>
        <taxon>Rodentia</taxon>
        <taxon>Myomorpha</taxon>
        <taxon>Muroidea</taxon>
        <taxon>Muridae</taxon>
        <taxon>Murinae</taxon>
        <taxon>Mus</taxon>
        <taxon>Mus</taxon>
    </lineage>
</organism>
<proteinExistence type="evidence at protein level"/>
<sequence length="793" mass="88997">MDSEQPDSLDGWVPLREDLFPEPERHQLRFLVAWNAAKGQFAVTCHDRTAQRRRRERREAGDGGCSWAGVLSPAGFRGAHRQLAALWPALEPCFPPLPPELDAASGAGWGLGRGLWALLWPLLWPAPADPGDSALQELCRQLEHYLGLAAEGCGGATVRDVLFPAPGDSADCEGLSEFRERTLRARLGQTATRLHQVLQDHGKANTMVALMKVYQEEDELYQELVTMATTFFQYLLQPFRDMREVATSCKLGILKSLDEDELGPRRVAALQKEASEWTRQAEEAVGSIQDITVNYFKETVTALTGMQKQMEQDQKRFGQAAWATAMPRLENLKLMLARETLQLMRAKELCLKHRQAEIQRKVEDLPRQGKQLDVVDELEIQCYEIQLELYDVKLEMLRNEETILVTRLDSVKRLITEKQAEVIYYDPCESPEELQSLAPDLELHLGDNRELRALSQQCQRLEAQRGRICSRRALLRNRKDHCRENHQLRLQQAKQSLRHLHQHHSIQMKRDKVKEEEQKKKEWIDHERQKTLERLRAYKEKCPAHRSALKTTCSESMVSNLPGGRSQKRLSTAHHHKTAHPASSKTGSAVPLPEASVRPPEHQDPCGSVPVQAFVPVSDQTLSGSSEDLSLPPQPPAPPLPPPPPPPPPPPLPPALSSFQGTTHQNLGLRTLATEDRPLPLACDPSAGRPCDYQGPGSMDEVLASLRQGKASLRKVETPTLPHPGTSVNEQVLAAIRQGVQLKKVHTGQGVDPGKKSTSDLERSIREALERIKKVSADSEEDNDEPSPTEWDR</sequence>
<evidence type="ECO:0000250" key="1"/>
<evidence type="ECO:0000250" key="2">
    <source>
        <dbReference type="UniProtKB" id="Q8TF30"/>
    </source>
</evidence>
<evidence type="ECO:0000255" key="3"/>
<evidence type="ECO:0000255" key="4">
    <source>
        <dbReference type="PROSITE-ProRule" id="PRU00406"/>
    </source>
</evidence>
<evidence type="ECO:0000256" key="5">
    <source>
        <dbReference type="SAM" id="MobiDB-lite"/>
    </source>
</evidence>
<evidence type="ECO:0000269" key="6">
    <source>
    </source>
</evidence>
<evidence type="ECO:0000303" key="7">
    <source>
    </source>
</evidence>
<evidence type="ECO:0000305" key="8"/>
<evidence type="ECO:0007744" key="9">
    <source>
    </source>
</evidence>
<keyword id="KW-0009">Actin-binding</keyword>
<keyword id="KW-0025">Alternative splicing</keyword>
<keyword id="KW-0175">Coiled coil</keyword>
<keyword id="KW-0963">Cytoplasm</keyword>
<keyword id="KW-0968">Cytoplasmic vesicle</keyword>
<keyword id="KW-0333">Golgi apparatus</keyword>
<keyword id="KW-0472">Membrane</keyword>
<keyword id="KW-0493">Microtubule</keyword>
<keyword id="KW-0597">Phosphoprotein</keyword>
<keyword id="KW-1185">Reference proteome</keyword>
<keyword id="KW-0677">Repeat</keyword>
<gene>
    <name type="primary">Whamm</name>
    <name type="synonym">Kiaa1971</name>
    <name type="synonym">Whdc1</name>
</gene>
<protein>
    <recommendedName>
        <fullName>WASP homolog-associated protein with actin, membranes and microtubules</fullName>
    </recommendedName>
    <alternativeName>
        <fullName>WAS protein homology region 2 domain-containing protein 1</fullName>
        <shortName>WH2 domain-containing protein 1</shortName>
    </alternativeName>
</protein>
<comment type="function">
    <text evidence="2 6">Acts as a nucleation-promoting factor (NPF) that stimulates Arp2/3-mediated actin polymerization both at the Golgi apparatus and along tubular membranes. Involved as a regulator of Golgi positioning and morphology. Its activity in membrane tubulation requires F-actin and interaction with microtubules. Proposed to use coordinated actin-nucleating and microtubule-binding activities of distinct WHAMM molecules to drive membrane tubule elongation; when MT-bound can recruit and remodel membrane vesicles but is prevented to activate the Arp2/3 complex. Required for RhoD-dependent actin reorganization such as in cell adhesion and cell migration (By similarity). Participates in vesicle transport between the endoplasmic reticulum and the Golgi complex.</text>
</comment>
<comment type="subunit">
    <text evidence="2">Interacts with ACTR3; indicative for an association with the ARP2/3 complex. Associates with microtubules; in vitro binds to tubulin heterodimer in a 1:1 stoichiometry; decorates microtubules with a repeat of 80 A along protofilaments. Interacts with RHOD (in GTP-bound form).</text>
</comment>
<comment type="subcellular location">
    <subcellularLocation>
        <location evidence="2">Cytoplasm</location>
    </subcellularLocation>
    <subcellularLocation>
        <location evidence="2">Endoplasmic reticulum-Golgi intermediate compartment</location>
    </subcellularLocation>
    <subcellularLocation>
        <location evidence="2">Cytoplasmic vesicle membrane</location>
    </subcellularLocation>
    <subcellularLocation>
        <location evidence="2">Golgi apparatus</location>
        <location evidence="2">cis-Golgi network</location>
    </subcellularLocation>
    <text evidence="2">Localized to a perinuclear compartment near the microtubule-organizing center (MTOC). Also detected on tubulo-vesicular structures in the cell periphery that frequently localized along microtubules.</text>
</comment>
<comment type="alternative products">
    <event type="alternative splicing"/>
    <isoform>
        <id>Q571B6-1</id>
        <name>1</name>
        <sequence type="displayed"/>
    </isoform>
    <isoform>
        <id>Q571B6-2</id>
        <name>2</name>
        <sequence type="described" ref="VSP_026722 VSP_026729"/>
    </isoform>
</comment>
<comment type="domain">
    <text evidence="1">The N-terminal region associates with membranes, the coiled-coil region binds to microtubules and the WH2 domains promotes actin nucleation.</text>
</comment>
<comment type="sequence caution" evidence="8">
    <conflict type="miscellaneous discrepancy">
        <sequence resource="EMBL-CDS" id="AAH42749"/>
    </conflict>
    <text>Aberrant splicing.</text>
</comment>
<comment type="sequence caution" evidence="8">
    <conflict type="miscellaneous discrepancy">
        <sequence resource="EMBL-CDS" id="BAC38074"/>
    </conflict>
    <text>Aberrant splicing.</text>
</comment>
<comment type="sequence caution" evidence="8">
    <conflict type="erroneous initiation">
        <sequence resource="EMBL-CDS" id="BAD90198"/>
    </conflict>
    <text>Extended N-terminus.</text>
</comment>
<dbReference type="EMBL" id="AK220273">
    <property type="protein sequence ID" value="BAD90198.1"/>
    <property type="status" value="ALT_INIT"/>
    <property type="molecule type" value="mRNA"/>
</dbReference>
<dbReference type="EMBL" id="BC042749">
    <property type="protein sequence ID" value="AAH42749.1"/>
    <property type="status" value="ALT_SEQ"/>
    <property type="molecule type" value="mRNA"/>
</dbReference>
<dbReference type="EMBL" id="BC050804">
    <property type="protein sequence ID" value="AAH50804.1"/>
    <property type="molecule type" value="mRNA"/>
</dbReference>
<dbReference type="EMBL" id="AK080911">
    <property type="protein sequence ID" value="BAC38074.1"/>
    <property type="status" value="ALT_SEQ"/>
    <property type="molecule type" value="mRNA"/>
</dbReference>
<dbReference type="CCDS" id="CCDS52283.1">
    <molecule id="Q571B6-1"/>
</dbReference>
<dbReference type="RefSeq" id="NP_001004185.3">
    <molecule id="Q571B6-1"/>
    <property type="nucleotide sequence ID" value="NM_001004185.3"/>
</dbReference>
<dbReference type="SMR" id="Q571B6"/>
<dbReference type="BioGRID" id="241668">
    <property type="interactions" value="1"/>
</dbReference>
<dbReference type="FunCoup" id="Q571B6">
    <property type="interactions" value="1625"/>
</dbReference>
<dbReference type="STRING" id="10090.ENSMUSP00000128881"/>
<dbReference type="iPTMnet" id="Q571B6"/>
<dbReference type="PhosphoSitePlus" id="Q571B6"/>
<dbReference type="jPOST" id="Q571B6"/>
<dbReference type="PaxDb" id="10090-ENSMUSP00000128881"/>
<dbReference type="PeptideAtlas" id="Q571B6"/>
<dbReference type="ProteomicsDB" id="299768">
    <molecule id="Q571B6-1"/>
</dbReference>
<dbReference type="ProteomicsDB" id="299769">
    <molecule id="Q571B6-2"/>
</dbReference>
<dbReference type="Antibodypedia" id="49806">
    <property type="antibodies" value="28 antibodies from 14 providers"/>
</dbReference>
<dbReference type="Ensembl" id="ENSMUST00000165460.2">
    <molecule id="Q571B6-1"/>
    <property type="protein sequence ID" value="ENSMUSP00000128881.2"/>
    <property type="gene ID" value="ENSMUSG00000045795.11"/>
</dbReference>
<dbReference type="Ensembl" id="ENSMUST00000209044.2">
    <molecule id="Q571B6-2"/>
    <property type="protein sequence ID" value="ENSMUSP00000146854.2"/>
    <property type="gene ID" value="ENSMUSG00000045795.11"/>
</dbReference>
<dbReference type="GeneID" id="434204"/>
<dbReference type="KEGG" id="mmu:434204"/>
<dbReference type="UCSC" id="uc012fny.1">
    <molecule id="Q571B6-1"/>
    <property type="organism name" value="mouse"/>
</dbReference>
<dbReference type="UCSC" id="uc012fnz.1">
    <molecule id="Q571B6-2"/>
    <property type="organism name" value="mouse"/>
</dbReference>
<dbReference type="AGR" id="MGI:2142282"/>
<dbReference type="CTD" id="123720"/>
<dbReference type="MGI" id="MGI:2142282">
    <property type="gene designation" value="Whamm"/>
</dbReference>
<dbReference type="VEuPathDB" id="HostDB:ENSMUSG00000045795"/>
<dbReference type="eggNOG" id="ENOG502QPSI">
    <property type="taxonomic scope" value="Eukaryota"/>
</dbReference>
<dbReference type="GeneTree" id="ENSGT00510000046704"/>
<dbReference type="HOGENOM" id="CLU_012316_1_0_1"/>
<dbReference type="InParanoid" id="Q571B6"/>
<dbReference type="OMA" id="IQFYEIQ"/>
<dbReference type="OrthoDB" id="6284683at2759"/>
<dbReference type="PhylomeDB" id="Q571B6"/>
<dbReference type="TreeFam" id="TF331023"/>
<dbReference type="Reactome" id="R-MMU-9013405">
    <property type="pathway name" value="RHOD GTPase cycle"/>
</dbReference>
<dbReference type="BioGRID-ORCS" id="434204">
    <property type="hits" value="0 hits in 76 CRISPR screens"/>
</dbReference>
<dbReference type="ChiTaRS" id="Whamm">
    <property type="organism name" value="mouse"/>
</dbReference>
<dbReference type="PRO" id="PR:Q571B6"/>
<dbReference type="Proteomes" id="UP000000589">
    <property type="component" value="Chromosome 7"/>
</dbReference>
<dbReference type="RNAct" id="Q571B6">
    <property type="molecule type" value="protein"/>
</dbReference>
<dbReference type="Bgee" id="ENSMUSG00000045795">
    <property type="expression patterns" value="Expressed in animal zygote and 208 other cell types or tissues"/>
</dbReference>
<dbReference type="ExpressionAtlas" id="Q571B6">
    <property type="expression patterns" value="baseline and differential"/>
</dbReference>
<dbReference type="GO" id="GO:0030659">
    <property type="term" value="C:cytoplasmic vesicle membrane"/>
    <property type="evidence" value="ECO:0007669"/>
    <property type="project" value="UniProtKB-SubCell"/>
</dbReference>
<dbReference type="GO" id="GO:0005829">
    <property type="term" value="C:cytosol"/>
    <property type="evidence" value="ECO:0007669"/>
    <property type="project" value="Ensembl"/>
</dbReference>
<dbReference type="GO" id="GO:0033116">
    <property type="term" value="C:endoplasmic reticulum-Golgi intermediate compartment membrane"/>
    <property type="evidence" value="ECO:0000250"/>
    <property type="project" value="UniProtKB"/>
</dbReference>
<dbReference type="GO" id="GO:0000139">
    <property type="term" value="C:Golgi membrane"/>
    <property type="evidence" value="ECO:0000250"/>
    <property type="project" value="UniProtKB"/>
</dbReference>
<dbReference type="GO" id="GO:0005874">
    <property type="term" value="C:microtubule"/>
    <property type="evidence" value="ECO:0007669"/>
    <property type="project" value="UniProtKB-KW"/>
</dbReference>
<dbReference type="GO" id="GO:0003779">
    <property type="term" value="F:actin binding"/>
    <property type="evidence" value="ECO:0007669"/>
    <property type="project" value="UniProtKB-KW"/>
</dbReference>
<dbReference type="GO" id="GO:0071933">
    <property type="term" value="F:Arp2/3 complex binding"/>
    <property type="evidence" value="ECO:0000250"/>
    <property type="project" value="UniProtKB"/>
</dbReference>
<dbReference type="GO" id="GO:0008017">
    <property type="term" value="F:microtubule binding"/>
    <property type="evidence" value="ECO:0000250"/>
    <property type="project" value="UniProtKB"/>
</dbReference>
<dbReference type="GO" id="GO:0031267">
    <property type="term" value="F:small GTPase binding"/>
    <property type="evidence" value="ECO:0000250"/>
    <property type="project" value="UniProtKB"/>
</dbReference>
<dbReference type="GO" id="GO:0007015">
    <property type="term" value="P:actin filament organization"/>
    <property type="evidence" value="ECO:0000250"/>
    <property type="project" value="UniProtKB"/>
</dbReference>
<dbReference type="GO" id="GO:0006888">
    <property type="term" value="P:endoplasmic reticulum to Golgi vesicle-mediated transport"/>
    <property type="evidence" value="ECO:0000315"/>
    <property type="project" value="UniProtKB"/>
</dbReference>
<dbReference type="GO" id="GO:0048041">
    <property type="term" value="P:focal adhesion assembly"/>
    <property type="evidence" value="ECO:0007669"/>
    <property type="project" value="Ensembl"/>
</dbReference>
<dbReference type="GO" id="GO:0030032">
    <property type="term" value="P:lamellipodium assembly"/>
    <property type="evidence" value="ECO:0007669"/>
    <property type="project" value="Ensembl"/>
</dbReference>
<dbReference type="GO" id="GO:0097320">
    <property type="term" value="P:plasma membrane tubulation"/>
    <property type="evidence" value="ECO:0000250"/>
    <property type="project" value="UniProtKB"/>
</dbReference>
<dbReference type="GO" id="GO:0051127">
    <property type="term" value="P:positive regulation of actin nucleation"/>
    <property type="evidence" value="ECO:0000250"/>
    <property type="project" value="UniProtKB"/>
</dbReference>
<dbReference type="InterPro" id="IPR031738">
    <property type="entry name" value="JMY/WHAMM"/>
</dbReference>
<dbReference type="InterPro" id="IPR031808">
    <property type="entry name" value="JMY/WHAMM_N"/>
</dbReference>
<dbReference type="InterPro" id="IPR003124">
    <property type="entry name" value="WH2_dom"/>
</dbReference>
<dbReference type="PANTHER" id="PTHR23330">
    <property type="entry name" value="P300 TRANSCRIPTIONAL COFACTOR JMY-RELATED"/>
    <property type="match status" value="1"/>
</dbReference>
<dbReference type="PANTHER" id="PTHR23330:SF6">
    <property type="entry name" value="WASP HOMOLOG-ASSOCIATED PROTEIN WITH ACTIN, MEMBRANES AND MICROTUBULES"/>
    <property type="match status" value="1"/>
</dbReference>
<dbReference type="Pfam" id="PF15871">
    <property type="entry name" value="JMY"/>
    <property type="match status" value="1"/>
</dbReference>
<dbReference type="Pfam" id="PF02205">
    <property type="entry name" value="WH2"/>
    <property type="match status" value="1"/>
</dbReference>
<dbReference type="Pfam" id="PF15920">
    <property type="entry name" value="WHAMM-JMY_N"/>
    <property type="match status" value="1"/>
</dbReference>
<dbReference type="PROSITE" id="PS51082">
    <property type="entry name" value="WH2"/>
    <property type="match status" value="2"/>
</dbReference>
<reference key="1">
    <citation type="submission" date="2005-02" db="EMBL/GenBank/DDBJ databases">
        <title>Prediction of the coding sequences of mouse homologues of KIAA gene. The complete nucleotide sequences of mouse KIAA-homologous cDNAs identified by screening of terminal sequences of cDNA clones randomly sampled from size-fractionated libraries.</title>
        <authorList>
            <person name="Okazaki N."/>
            <person name="Kikuno R.F."/>
            <person name="Ohara R."/>
            <person name="Inamoto S."/>
            <person name="Nagase T."/>
            <person name="Ohara O."/>
            <person name="Koga H."/>
        </authorList>
    </citation>
    <scope>NUCLEOTIDE SEQUENCE [LARGE SCALE MRNA] (ISOFORM 1)</scope>
    <source>
        <tissue>Pancreatic islet</tissue>
    </source>
</reference>
<reference key="2">
    <citation type="journal article" date="2004" name="Genome Res.">
        <title>The status, quality, and expansion of the NIH full-length cDNA project: the Mammalian Gene Collection (MGC).</title>
        <authorList>
            <consortium name="The MGC Project Team"/>
        </authorList>
    </citation>
    <scope>NUCLEOTIDE SEQUENCE [LARGE SCALE MRNA] (ISOFORM 2)</scope>
    <scope>NUCLEOTIDE SEQUENCE [LARGE SCALE MRNA] OF 96-793 (ISOFORM 1)</scope>
    <source>
        <strain>FVB/N</strain>
        <tissue>Mammary tumor</tissue>
        <tissue>Testis</tissue>
    </source>
</reference>
<reference key="3">
    <citation type="journal article" date="2005" name="Science">
        <title>The transcriptional landscape of the mammalian genome.</title>
        <authorList>
            <person name="Carninci P."/>
            <person name="Kasukawa T."/>
            <person name="Katayama S."/>
            <person name="Gough J."/>
            <person name="Frith M.C."/>
            <person name="Maeda N."/>
            <person name="Oyama R."/>
            <person name="Ravasi T."/>
            <person name="Lenhard B."/>
            <person name="Wells C."/>
            <person name="Kodzius R."/>
            <person name="Shimokawa K."/>
            <person name="Bajic V.B."/>
            <person name="Brenner S.E."/>
            <person name="Batalov S."/>
            <person name="Forrest A.R."/>
            <person name="Zavolan M."/>
            <person name="Davis M.J."/>
            <person name="Wilming L.G."/>
            <person name="Aidinis V."/>
            <person name="Allen J.E."/>
            <person name="Ambesi-Impiombato A."/>
            <person name="Apweiler R."/>
            <person name="Aturaliya R.N."/>
            <person name="Bailey T.L."/>
            <person name="Bansal M."/>
            <person name="Baxter L."/>
            <person name="Beisel K.W."/>
            <person name="Bersano T."/>
            <person name="Bono H."/>
            <person name="Chalk A.M."/>
            <person name="Chiu K.P."/>
            <person name="Choudhary V."/>
            <person name="Christoffels A."/>
            <person name="Clutterbuck D.R."/>
            <person name="Crowe M.L."/>
            <person name="Dalla E."/>
            <person name="Dalrymple B.P."/>
            <person name="de Bono B."/>
            <person name="Della Gatta G."/>
            <person name="di Bernardo D."/>
            <person name="Down T."/>
            <person name="Engstrom P."/>
            <person name="Fagiolini M."/>
            <person name="Faulkner G."/>
            <person name="Fletcher C.F."/>
            <person name="Fukushima T."/>
            <person name="Furuno M."/>
            <person name="Futaki S."/>
            <person name="Gariboldi M."/>
            <person name="Georgii-Hemming P."/>
            <person name="Gingeras T.R."/>
            <person name="Gojobori T."/>
            <person name="Green R.E."/>
            <person name="Gustincich S."/>
            <person name="Harbers M."/>
            <person name="Hayashi Y."/>
            <person name="Hensch T.K."/>
            <person name="Hirokawa N."/>
            <person name="Hill D."/>
            <person name="Huminiecki L."/>
            <person name="Iacono M."/>
            <person name="Ikeo K."/>
            <person name="Iwama A."/>
            <person name="Ishikawa T."/>
            <person name="Jakt M."/>
            <person name="Kanapin A."/>
            <person name="Katoh M."/>
            <person name="Kawasawa Y."/>
            <person name="Kelso J."/>
            <person name="Kitamura H."/>
            <person name="Kitano H."/>
            <person name="Kollias G."/>
            <person name="Krishnan S.P."/>
            <person name="Kruger A."/>
            <person name="Kummerfeld S.K."/>
            <person name="Kurochkin I.V."/>
            <person name="Lareau L.F."/>
            <person name="Lazarevic D."/>
            <person name="Lipovich L."/>
            <person name="Liu J."/>
            <person name="Liuni S."/>
            <person name="McWilliam S."/>
            <person name="Madan Babu M."/>
            <person name="Madera M."/>
            <person name="Marchionni L."/>
            <person name="Matsuda H."/>
            <person name="Matsuzawa S."/>
            <person name="Miki H."/>
            <person name="Mignone F."/>
            <person name="Miyake S."/>
            <person name="Morris K."/>
            <person name="Mottagui-Tabar S."/>
            <person name="Mulder N."/>
            <person name="Nakano N."/>
            <person name="Nakauchi H."/>
            <person name="Ng P."/>
            <person name="Nilsson R."/>
            <person name="Nishiguchi S."/>
            <person name="Nishikawa S."/>
            <person name="Nori F."/>
            <person name="Ohara O."/>
            <person name="Okazaki Y."/>
            <person name="Orlando V."/>
            <person name="Pang K.C."/>
            <person name="Pavan W.J."/>
            <person name="Pavesi G."/>
            <person name="Pesole G."/>
            <person name="Petrovsky N."/>
            <person name="Piazza S."/>
            <person name="Reed J."/>
            <person name="Reid J.F."/>
            <person name="Ring B.Z."/>
            <person name="Ringwald M."/>
            <person name="Rost B."/>
            <person name="Ruan Y."/>
            <person name="Salzberg S.L."/>
            <person name="Sandelin A."/>
            <person name="Schneider C."/>
            <person name="Schoenbach C."/>
            <person name="Sekiguchi K."/>
            <person name="Semple C.A."/>
            <person name="Seno S."/>
            <person name="Sessa L."/>
            <person name="Sheng Y."/>
            <person name="Shibata Y."/>
            <person name="Shimada H."/>
            <person name="Shimada K."/>
            <person name="Silva D."/>
            <person name="Sinclair B."/>
            <person name="Sperling S."/>
            <person name="Stupka E."/>
            <person name="Sugiura K."/>
            <person name="Sultana R."/>
            <person name="Takenaka Y."/>
            <person name="Taki K."/>
            <person name="Tammoja K."/>
            <person name="Tan S.L."/>
            <person name="Tang S."/>
            <person name="Taylor M.S."/>
            <person name="Tegner J."/>
            <person name="Teichmann S.A."/>
            <person name="Ueda H.R."/>
            <person name="van Nimwegen E."/>
            <person name="Verardo R."/>
            <person name="Wei C.L."/>
            <person name="Yagi K."/>
            <person name="Yamanishi H."/>
            <person name="Zabarovsky E."/>
            <person name="Zhu S."/>
            <person name="Zimmer A."/>
            <person name="Hide W."/>
            <person name="Bult C."/>
            <person name="Grimmond S.M."/>
            <person name="Teasdale R.D."/>
            <person name="Liu E.T."/>
            <person name="Brusic V."/>
            <person name="Quackenbush J."/>
            <person name="Wahlestedt C."/>
            <person name="Mattick J.S."/>
            <person name="Hume D.A."/>
            <person name="Kai C."/>
            <person name="Sasaki D."/>
            <person name="Tomaru Y."/>
            <person name="Fukuda S."/>
            <person name="Kanamori-Katayama M."/>
            <person name="Suzuki M."/>
            <person name="Aoki J."/>
            <person name="Arakawa T."/>
            <person name="Iida J."/>
            <person name="Imamura K."/>
            <person name="Itoh M."/>
            <person name="Kato T."/>
            <person name="Kawaji H."/>
            <person name="Kawagashira N."/>
            <person name="Kawashima T."/>
            <person name="Kojima M."/>
            <person name="Kondo S."/>
            <person name="Konno H."/>
            <person name="Nakano K."/>
            <person name="Ninomiya N."/>
            <person name="Nishio T."/>
            <person name="Okada M."/>
            <person name="Plessy C."/>
            <person name="Shibata K."/>
            <person name="Shiraki T."/>
            <person name="Suzuki S."/>
            <person name="Tagami M."/>
            <person name="Waki K."/>
            <person name="Watahiki A."/>
            <person name="Okamura-Oho Y."/>
            <person name="Suzuki H."/>
            <person name="Kawai J."/>
            <person name="Hayashizaki Y."/>
        </authorList>
    </citation>
    <scope>NUCLEOTIDE SEQUENCE [LARGE SCALE MRNA] OF 154-471 (ISOFORM 1)</scope>
    <source>
        <strain>C57BL/6J</strain>
        <tissue>Adipose tissue</tissue>
    </source>
</reference>
<reference key="4">
    <citation type="journal article" date="2008" name="Cell">
        <title>WHAMM is an Arp2/3 complex activator that binds microtubules and functions in ER to Golgi transport.</title>
        <authorList>
            <person name="Campellone K.G."/>
            <person name="Webb N.J."/>
            <person name="Znameroski E.A."/>
            <person name="Welch M.D."/>
        </authorList>
    </citation>
    <scope>FUNCTION</scope>
</reference>
<reference key="5">
    <citation type="journal article" date="2010" name="Cell">
        <title>A tissue-specific atlas of mouse protein phosphorylation and expression.</title>
        <authorList>
            <person name="Huttlin E.L."/>
            <person name="Jedrychowski M.P."/>
            <person name="Elias J.E."/>
            <person name="Goswami T."/>
            <person name="Rad R."/>
            <person name="Beausoleil S.A."/>
            <person name="Villen J."/>
            <person name="Haas W."/>
            <person name="Sowa M.E."/>
            <person name="Gygi S.P."/>
        </authorList>
    </citation>
    <scope>PHOSPHORYLATION [LARGE SCALE ANALYSIS] AT SER-779</scope>
    <scope>IDENTIFICATION BY MASS SPECTROMETRY [LARGE SCALE ANALYSIS]</scope>
    <source>
        <tissue>Kidney</tissue>
        <tissue>Liver</tissue>
        <tissue>Pancreas</tissue>
        <tissue>Spleen</tissue>
    </source>
</reference>